<comment type="function">
    <text evidence="2">Involved in lignin biosynthesis. Catalyzes the final step specific for the production of lignin monomers. Catalyzes the NADPH-dependent reduction of coniferaldehyde, 5-hydroxyconiferaldehyde, sinapaldehyde, 4-coumaraldehyde and caffeyl aldehyde to their respective alcohols.</text>
</comment>
<comment type="catalytic activity">
    <reaction evidence="2">
        <text>(E)-cinnamyl alcohol + NADP(+) = (E)-cinnamaldehyde + NADPH + H(+)</text>
        <dbReference type="Rhea" id="RHEA:10392"/>
        <dbReference type="ChEBI" id="CHEBI:15378"/>
        <dbReference type="ChEBI" id="CHEBI:16731"/>
        <dbReference type="ChEBI" id="CHEBI:33227"/>
        <dbReference type="ChEBI" id="CHEBI:57783"/>
        <dbReference type="ChEBI" id="CHEBI:58349"/>
        <dbReference type="EC" id="1.1.1.195"/>
    </reaction>
    <physiologicalReaction direction="right-to-left" evidence="2">
        <dbReference type="Rhea" id="RHEA:10394"/>
    </physiologicalReaction>
</comment>
<comment type="cofactor">
    <cofactor evidence="1">
        <name>Zn(2+)</name>
        <dbReference type="ChEBI" id="CHEBI:29105"/>
    </cofactor>
    <text evidence="1">Binds 2 Zn(2+) ions per subunit.</text>
</comment>
<comment type="biophysicochemical properties">
    <kinetics>
        <KM evidence="2">302 uM for 4-coumaraldehyde (at pH 6.25 and 42 degrees Celsius)</KM>
        <KM evidence="2">683 uM for caffeyl aldehyde (at pH 6.0 and 35 degrees Celsius)</KM>
        <KM evidence="2">141 uM for coniferaldehyde (at pH 6.25 and 42 degrees Celsius)</KM>
        <KM evidence="2">457 uM for 5-hydroxyconiferaldehyde (at pH 6.25 and 42 degrees Celsius)</KM>
        <KM evidence="2">898 uM for sinapaldehyde (at pH 6.25-6.5 and 25 degrees Celsius)</KM>
        <Vmax evidence="2">20.4 pmol/sec/ug enzyme with 4-coumaraldehyde as substrate (at pH 6.25 and 42 degrees Celsius)</Vmax>
        <Vmax evidence="2">7.0 pmol/sec/ug enzyme with caffeyl aldehyde as substrate (at pH 6.0 and 35 degrees Celsius)</Vmax>
        <Vmax evidence="2">5.6 pmol/sec/ug enzyme with coniferaldehyde as substrate (at pH 6.25 and 42 degrees Celsius)</Vmax>
        <Vmax evidence="2">10.4 pmol/sec/ug enzyme with 5-hydroxyconiferaldehyde as substrate (at pH 6.25 and 42 degrees Celsius)</Vmax>
        <Vmax evidence="2">28.9 pmol/sec/ug enzyme with sinapaldehyde as substrate (at pH 6.25-6.5 and 25 degrees Celsius)</Vmax>
    </kinetics>
</comment>
<comment type="pathway">
    <text evidence="2">Aromatic compound metabolism; phenylpropanoid biosynthesis.</text>
</comment>
<comment type="subunit">
    <text evidence="1">Homodimer.</text>
</comment>
<comment type="tissue specificity">
    <text evidence="3 4">Expressed in the differentiation and elongation zones of primary and lateral roots. Expressed in the hypocotyl, cotyledon veins, vasculature of the first rosette leaves, hydathodes and trichomes. In stems, expressed in the vascular cambium and developing xylem tissues. Expressed in the style, anthers, stamen filaments, stigmatic regions in flowers, and abscission and style regions of siliques.</text>
</comment>
<comment type="similarity">
    <text evidence="6">Belongs to the zinc-containing alcohol dehydrogenase family.</text>
</comment>
<feature type="chain" id="PRO_0000160809" description="Cinnamyl alcohol dehydrogenase 8">
    <location>
        <begin position="1"/>
        <end position="359"/>
    </location>
</feature>
<feature type="binding site" evidence="1">
    <location>
        <position position="46"/>
    </location>
    <ligand>
        <name>Zn(2+)</name>
        <dbReference type="ChEBI" id="CHEBI:29105"/>
        <label>1</label>
        <note>catalytic</note>
    </ligand>
</feature>
<feature type="binding site" evidence="1">
    <location>
        <position position="48"/>
    </location>
    <ligand>
        <name>NADP(+)</name>
        <dbReference type="ChEBI" id="CHEBI:58349"/>
    </ligand>
</feature>
<feature type="binding site" evidence="1">
    <location>
        <position position="68"/>
    </location>
    <ligand>
        <name>Zn(2+)</name>
        <dbReference type="ChEBI" id="CHEBI:29105"/>
        <label>1</label>
        <note>catalytic</note>
    </ligand>
</feature>
<feature type="binding site" evidence="1">
    <location>
        <position position="69"/>
    </location>
    <ligand>
        <name>Zn(2+)</name>
        <dbReference type="ChEBI" id="CHEBI:29105"/>
        <label>1</label>
        <note>catalytic</note>
    </ligand>
</feature>
<feature type="binding site" evidence="1">
    <location>
        <position position="99"/>
    </location>
    <ligand>
        <name>Zn(2+)</name>
        <dbReference type="ChEBI" id="CHEBI:29105"/>
        <label>2</label>
    </ligand>
</feature>
<feature type="binding site" evidence="1">
    <location>
        <position position="102"/>
    </location>
    <ligand>
        <name>Zn(2+)</name>
        <dbReference type="ChEBI" id="CHEBI:29105"/>
        <label>2</label>
    </ligand>
</feature>
<feature type="binding site" evidence="1">
    <location>
        <position position="105"/>
    </location>
    <ligand>
        <name>Zn(2+)</name>
        <dbReference type="ChEBI" id="CHEBI:29105"/>
        <label>2</label>
    </ligand>
</feature>
<feature type="binding site" evidence="1">
    <location>
        <position position="113"/>
    </location>
    <ligand>
        <name>Zn(2+)</name>
        <dbReference type="ChEBI" id="CHEBI:29105"/>
        <label>2</label>
    </ligand>
</feature>
<feature type="binding site" evidence="1">
    <location>
        <position position="162"/>
    </location>
    <ligand>
        <name>Zn(2+)</name>
        <dbReference type="ChEBI" id="CHEBI:29105"/>
        <label>1</label>
        <note>catalytic</note>
    </ligand>
</feature>
<feature type="binding site" evidence="1">
    <location>
        <position position="166"/>
    </location>
    <ligand>
        <name>NADP(+)</name>
        <dbReference type="ChEBI" id="CHEBI:58349"/>
    </ligand>
</feature>
<feature type="binding site" evidence="1">
    <location>
        <begin position="187"/>
        <end position="192"/>
    </location>
    <ligand>
        <name>NADP(+)</name>
        <dbReference type="ChEBI" id="CHEBI:58349"/>
    </ligand>
</feature>
<feature type="binding site" evidence="1">
    <location>
        <begin position="210"/>
        <end position="215"/>
    </location>
    <ligand>
        <name>NADP(+)</name>
        <dbReference type="ChEBI" id="CHEBI:58349"/>
    </ligand>
</feature>
<feature type="binding site" evidence="1">
    <location>
        <position position="250"/>
    </location>
    <ligand>
        <name>NADP(+)</name>
        <dbReference type="ChEBI" id="CHEBI:58349"/>
    </ligand>
</feature>
<feature type="binding site" evidence="1">
    <location>
        <position position="274"/>
    </location>
    <ligand>
        <name>NADP(+)</name>
        <dbReference type="ChEBI" id="CHEBI:58349"/>
    </ligand>
</feature>
<feature type="binding site" evidence="1">
    <location>
        <begin position="297"/>
        <end position="299"/>
    </location>
    <ligand>
        <name>NADP(+)</name>
        <dbReference type="ChEBI" id="CHEBI:58349"/>
    </ligand>
</feature>
<organism>
    <name type="scientific">Arabidopsis thaliana</name>
    <name type="common">Mouse-ear cress</name>
    <dbReference type="NCBI Taxonomy" id="3702"/>
    <lineage>
        <taxon>Eukaryota</taxon>
        <taxon>Viridiplantae</taxon>
        <taxon>Streptophyta</taxon>
        <taxon>Embryophyta</taxon>
        <taxon>Tracheophyta</taxon>
        <taxon>Spermatophyta</taxon>
        <taxon>Magnoliopsida</taxon>
        <taxon>eudicotyledons</taxon>
        <taxon>Gunneridae</taxon>
        <taxon>Pentapetalae</taxon>
        <taxon>rosids</taxon>
        <taxon>malvids</taxon>
        <taxon>Brassicales</taxon>
        <taxon>Brassicaceae</taxon>
        <taxon>Camelineae</taxon>
        <taxon>Arabidopsis</taxon>
    </lineage>
</organism>
<evidence type="ECO:0000250" key="1"/>
<evidence type="ECO:0000269" key="2">
    <source>
    </source>
</evidence>
<evidence type="ECO:0000269" key="3">
    <source>
    </source>
</evidence>
<evidence type="ECO:0000269" key="4">
    <source>
    </source>
</evidence>
<evidence type="ECO:0000303" key="5">
    <source>
    </source>
</evidence>
<evidence type="ECO:0000305" key="6"/>
<reference key="1">
    <citation type="journal article" date="1992" name="EMBO J.">
        <title>Rapid activation of a novel plant defense gene is strictly dependent on the Arabidopsis RPM1 disease resistance locus.</title>
        <authorList>
            <person name="Kiedrowski S."/>
            <person name="Kawalleck P."/>
            <person name="Hahlbrock K."/>
            <person name="Somssich I.E."/>
            <person name="Dangl J.L."/>
        </authorList>
    </citation>
    <scope>NUCLEOTIDE SEQUENCE [MRNA]</scope>
    <source>
        <strain>cv. Columbia</strain>
    </source>
</reference>
<reference key="2">
    <citation type="journal article" date="2004" name="Proc. Natl. Acad. Sci. U.S.A.">
        <title>Functional reclassification of the putative cinnamyl alcohol dehydrogenase multigene family in Arabidopsis.</title>
        <authorList>
            <person name="Kim S.-J."/>
            <person name="Kim M.-R."/>
            <person name="Bedgar D.L."/>
            <person name="Moinuddin S.G.A."/>
            <person name="Cardenas C.L."/>
            <person name="Davin L.B."/>
            <person name="Kang C."/>
            <person name="Lewis N.G."/>
        </authorList>
    </citation>
    <scope>NUCLEOTIDE SEQUENCE [MRNA]</scope>
    <scope>FUNCTION</scope>
    <scope>CATALYTIC ACTIVITY</scope>
    <scope>BIOPHYSICOCHEMICAL PROPERTIES</scope>
    <scope>PATHWAY</scope>
    <scope>GENE FAMILY</scope>
    <scope>NOMENCLATURE</scope>
</reference>
<reference key="3">
    <citation type="journal article" date="1999" name="Nature">
        <title>Sequence and analysis of chromosome 4 of the plant Arabidopsis thaliana.</title>
        <authorList>
            <person name="Mayer K.F.X."/>
            <person name="Schueller C."/>
            <person name="Wambutt R."/>
            <person name="Murphy G."/>
            <person name="Volckaert G."/>
            <person name="Pohl T."/>
            <person name="Duesterhoeft A."/>
            <person name="Stiekema W."/>
            <person name="Entian K.-D."/>
            <person name="Terryn N."/>
            <person name="Harris B."/>
            <person name="Ansorge W."/>
            <person name="Brandt P."/>
            <person name="Grivell L.A."/>
            <person name="Rieger M."/>
            <person name="Weichselgartner M."/>
            <person name="de Simone V."/>
            <person name="Obermaier B."/>
            <person name="Mache R."/>
            <person name="Mueller M."/>
            <person name="Kreis M."/>
            <person name="Delseny M."/>
            <person name="Puigdomenech P."/>
            <person name="Watson M."/>
            <person name="Schmidtheini T."/>
            <person name="Reichert B."/>
            <person name="Portetelle D."/>
            <person name="Perez-Alonso M."/>
            <person name="Boutry M."/>
            <person name="Bancroft I."/>
            <person name="Vos P."/>
            <person name="Hoheisel J."/>
            <person name="Zimmermann W."/>
            <person name="Wedler H."/>
            <person name="Ridley P."/>
            <person name="Langham S.-A."/>
            <person name="McCullagh B."/>
            <person name="Bilham L."/>
            <person name="Robben J."/>
            <person name="van der Schueren J."/>
            <person name="Grymonprez B."/>
            <person name="Chuang Y.-J."/>
            <person name="Vandenbussche F."/>
            <person name="Braeken M."/>
            <person name="Weltjens I."/>
            <person name="Voet M."/>
            <person name="Bastiaens I."/>
            <person name="Aert R."/>
            <person name="Defoor E."/>
            <person name="Weitzenegger T."/>
            <person name="Bothe G."/>
            <person name="Ramsperger U."/>
            <person name="Hilbert H."/>
            <person name="Braun M."/>
            <person name="Holzer E."/>
            <person name="Brandt A."/>
            <person name="Peters S."/>
            <person name="van Staveren M."/>
            <person name="Dirkse W."/>
            <person name="Mooijman P."/>
            <person name="Klein Lankhorst R."/>
            <person name="Rose M."/>
            <person name="Hauf J."/>
            <person name="Koetter P."/>
            <person name="Berneiser S."/>
            <person name="Hempel S."/>
            <person name="Feldpausch M."/>
            <person name="Lamberth S."/>
            <person name="Van den Daele H."/>
            <person name="De Keyser A."/>
            <person name="Buysshaert C."/>
            <person name="Gielen J."/>
            <person name="Villarroel R."/>
            <person name="De Clercq R."/>
            <person name="van Montagu M."/>
            <person name="Rogers J."/>
            <person name="Cronin A."/>
            <person name="Quail M.A."/>
            <person name="Bray-Allen S."/>
            <person name="Clark L."/>
            <person name="Doggett J."/>
            <person name="Hall S."/>
            <person name="Kay M."/>
            <person name="Lennard N."/>
            <person name="McLay K."/>
            <person name="Mayes R."/>
            <person name="Pettett A."/>
            <person name="Rajandream M.A."/>
            <person name="Lyne M."/>
            <person name="Benes V."/>
            <person name="Rechmann S."/>
            <person name="Borkova D."/>
            <person name="Bloecker H."/>
            <person name="Scharfe M."/>
            <person name="Grimm M."/>
            <person name="Loehnert T.-H."/>
            <person name="Dose S."/>
            <person name="de Haan M."/>
            <person name="Maarse A.C."/>
            <person name="Schaefer M."/>
            <person name="Mueller-Auer S."/>
            <person name="Gabel C."/>
            <person name="Fuchs M."/>
            <person name="Fartmann B."/>
            <person name="Granderath K."/>
            <person name="Dauner D."/>
            <person name="Herzl A."/>
            <person name="Neumann S."/>
            <person name="Argiriou A."/>
            <person name="Vitale D."/>
            <person name="Liguori R."/>
            <person name="Piravandi E."/>
            <person name="Massenet O."/>
            <person name="Quigley F."/>
            <person name="Clabauld G."/>
            <person name="Muendlein A."/>
            <person name="Felber R."/>
            <person name="Schnabl S."/>
            <person name="Hiller R."/>
            <person name="Schmidt W."/>
            <person name="Lecharny A."/>
            <person name="Aubourg S."/>
            <person name="Chefdor F."/>
            <person name="Cooke R."/>
            <person name="Berger C."/>
            <person name="Monfort A."/>
            <person name="Casacuberta E."/>
            <person name="Gibbons T."/>
            <person name="Weber N."/>
            <person name="Vandenbol M."/>
            <person name="Bargues M."/>
            <person name="Terol J."/>
            <person name="Torres A."/>
            <person name="Perez-Perez A."/>
            <person name="Purnelle B."/>
            <person name="Bent E."/>
            <person name="Johnson S."/>
            <person name="Tacon D."/>
            <person name="Jesse T."/>
            <person name="Heijnen L."/>
            <person name="Schwarz S."/>
            <person name="Scholler P."/>
            <person name="Heber S."/>
            <person name="Francs P."/>
            <person name="Bielke C."/>
            <person name="Frishman D."/>
            <person name="Haase D."/>
            <person name="Lemcke K."/>
            <person name="Mewes H.-W."/>
            <person name="Stocker S."/>
            <person name="Zaccaria P."/>
            <person name="Bevan M."/>
            <person name="Wilson R.K."/>
            <person name="de la Bastide M."/>
            <person name="Habermann K."/>
            <person name="Parnell L."/>
            <person name="Dedhia N."/>
            <person name="Gnoj L."/>
            <person name="Schutz K."/>
            <person name="Huang E."/>
            <person name="Spiegel L."/>
            <person name="Sekhon M."/>
            <person name="Murray J."/>
            <person name="Sheet P."/>
            <person name="Cordes M."/>
            <person name="Abu-Threideh J."/>
            <person name="Stoneking T."/>
            <person name="Kalicki J."/>
            <person name="Graves T."/>
            <person name="Harmon G."/>
            <person name="Edwards J."/>
            <person name="Latreille P."/>
            <person name="Courtney L."/>
            <person name="Cloud J."/>
            <person name="Abbott A."/>
            <person name="Scott K."/>
            <person name="Johnson D."/>
            <person name="Minx P."/>
            <person name="Bentley D."/>
            <person name="Fulton B."/>
            <person name="Miller N."/>
            <person name="Greco T."/>
            <person name="Kemp K."/>
            <person name="Kramer J."/>
            <person name="Fulton L."/>
            <person name="Mardis E."/>
            <person name="Dante M."/>
            <person name="Pepin K."/>
            <person name="Hillier L.W."/>
            <person name="Nelson J."/>
            <person name="Spieth J."/>
            <person name="Ryan E."/>
            <person name="Andrews S."/>
            <person name="Geisel C."/>
            <person name="Layman D."/>
            <person name="Du H."/>
            <person name="Ali J."/>
            <person name="Berghoff A."/>
            <person name="Jones K."/>
            <person name="Drone K."/>
            <person name="Cotton M."/>
            <person name="Joshu C."/>
            <person name="Antonoiu B."/>
            <person name="Zidanic M."/>
            <person name="Strong C."/>
            <person name="Sun H."/>
            <person name="Lamar B."/>
            <person name="Yordan C."/>
            <person name="Ma P."/>
            <person name="Zhong J."/>
            <person name="Preston R."/>
            <person name="Vil D."/>
            <person name="Shekher M."/>
            <person name="Matero A."/>
            <person name="Shah R."/>
            <person name="Swaby I.K."/>
            <person name="O'Shaughnessy A."/>
            <person name="Rodriguez M."/>
            <person name="Hoffman J."/>
            <person name="Till S."/>
            <person name="Granat S."/>
            <person name="Shohdy N."/>
            <person name="Hasegawa A."/>
            <person name="Hameed A."/>
            <person name="Lodhi M."/>
            <person name="Johnson A."/>
            <person name="Chen E."/>
            <person name="Marra M.A."/>
            <person name="Martienssen R."/>
            <person name="McCombie W.R."/>
        </authorList>
    </citation>
    <scope>NUCLEOTIDE SEQUENCE [LARGE SCALE GENOMIC DNA]</scope>
    <source>
        <strain>cv. Columbia</strain>
    </source>
</reference>
<reference key="4">
    <citation type="journal article" date="2017" name="Plant J.">
        <title>Araport11: a complete reannotation of the Arabidopsis thaliana reference genome.</title>
        <authorList>
            <person name="Cheng C.Y."/>
            <person name="Krishnakumar V."/>
            <person name="Chan A.P."/>
            <person name="Thibaud-Nissen F."/>
            <person name="Schobel S."/>
            <person name="Town C.D."/>
        </authorList>
    </citation>
    <scope>GENOME REANNOTATION</scope>
    <source>
        <strain>cv. Columbia</strain>
    </source>
</reference>
<reference key="5">
    <citation type="journal article" date="2003" name="Science">
        <title>Empirical analysis of transcriptional activity in the Arabidopsis genome.</title>
        <authorList>
            <person name="Yamada K."/>
            <person name="Lim J."/>
            <person name="Dale J.M."/>
            <person name="Chen H."/>
            <person name="Shinn P."/>
            <person name="Palm C.J."/>
            <person name="Southwick A.M."/>
            <person name="Wu H.C."/>
            <person name="Kim C.J."/>
            <person name="Nguyen M."/>
            <person name="Pham P.K."/>
            <person name="Cheuk R.F."/>
            <person name="Karlin-Newmann G."/>
            <person name="Liu S.X."/>
            <person name="Lam B."/>
            <person name="Sakano H."/>
            <person name="Wu T."/>
            <person name="Yu G."/>
            <person name="Miranda M."/>
            <person name="Quach H.L."/>
            <person name="Tripp M."/>
            <person name="Chang C.H."/>
            <person name="Lee J.M."/>
            <person name="Toriumi M.J."/>
            <person name="Chan M.M."/>
            <person name="Tang C.C."/>
            <person name="Onodera C.S."/>
            <person name="Deng J.M."/>
            <person name="Akiyama K."/>
            <person name="Ansari Y."/>
            <person name="Arakawa T."/>
            <person name="Banh J."/>
            <person name="Banno F."/>
            <person name="Bowser L."/>
            <person name="Brooks S.Y."/>
            <person name="Carninci P."/>
            <person name="Chao Q."/>
            <person name="Choy N."/>
            <person name="Enju A."/>
            <person name="Goldsmith A.D."/>
            <person name="Gurjal M."/>
            <person name="Hansen N.F."/>
            <person name="Hayashizaki Y."/>
            <person name="Johnson-Hopson C."/>
            <person name="Hsuan V.W."/>
            <person name="Iida K."/>
            <person name="Karnes M."/>
            <person name="Khan S."/>
            <person name="Koesema E."/>
            <person name="Ishida J."/>
            <person name="Jiang P.X."/>
            <person name="Jones T."/>
            <person name="Kawai J."/>
            <person name="Kamiya A."/>
            <person name="Meyers C."/>
            <person name="Nakajima M."/>
            <person name="Narusaka M."/>
            <person name="Seki M."/>
            <person name="Sakurai T."/>
            <person name="Satou M."/>
            <person name="Tamse R."/>
            <person name="Vaysberg M."/>
            <person name="Wallender E.K."/>
            <person name="Wong C."/>
            <person name="Yamamura Y."/>
            <person name="Yuan S."/>
            <person name="Shinozaki K."/>
            <person name="Davis R.W."/>
            <person name="Theologis A."/>
            <person name="Ecker J.R."/>
        </authorList>
    </citation>
    <scope>NUCLEOTIDE SEQUENCE [LARGE SCALE MRNA]</scope>
    <source>
        <strain>cv. Columbia</strain>
    </source>
</reference>
<reference key="6">
    <citation type="journal article" date="2006" name="Planta">
        <title>Evidence for a role of AtCAD 1 in lignification of elongating stems of Arabidopsis thaliana.</title>
        <authorList>
            <person name="Eudes A."/>
            <person name="Pollet B."/>
            <person name="Sibout R."/>
            <person name="Do C.-T."/>
            <person name="Seguin A."/>
            <person name="Lapierre C."/>
            <person name="Jouanin L."/>
        </authorList>
    </citation>
    <scope>TISSUE SPECIFICITY</scope>
</reference>
<reference key="7">
    <citation type="journal article" date="2007" name="Phytochemistry">
        <title>Expression of cinnamyl alcohol dehydrogenases and their putative homologues during Arabidopsis thaliana growth and development: lessons for database annotations?</title>
        <authorList>
            <person name="Kim S.-J."/>
            <person name="Kim K.-W."/>
            <person name="Cho M.-H."/>
            <person name="Franceschi V.R."/>
            <person name="Davin L.B."/>
            <person name="Lewis N.G."/>
        </authorList>
    </citation>
    <scope>TISSUE SPECIFICITY</scope>
</reference>
<sequence>MGKVLQKEAFGLAAKDNSGVLSPFSFTRRETGEKDVRFKVLFCGICHSDLHMVKNEWGMSTYPLVPGHEIVGVVTEVGAKVTKFKTGEKVGVGCLVSSCGSCDSCTEGMENYCPKSIQTYGFPYYDNTITYGGYSDHMVCEEGFVIRIPDNLPLDAAAPLLCAGITVYSPMKYHGLDKPGMHIGVVGLGGLGHVGVKFAKAMGTKVTVISTSEKKRDEAINRLGADAFLVSRDPKQIKDAMGTMDGIIDTVSATHSLLPLLGLLKHKGKLVMVGAPEKPLELPVMPLIFERKMVMGSMIGGIKETQEMIDMAGKHNITADIELISADYVNTAMERLEKADVRYRFVIDVANTLKPNPNL</sequence>
<accession>Q02972</accession>
<accession>Q53ZN2</accession>
<gene>
    <name type="primary">CAD8</name>
    <name type="synonym">BAD</name>
    <name type="synonym">CAD5</name>
    <name type="synonym">CADB2</name>
    <name type="synonym">ELI3-2</name>
    <name type="ordered locus">At4g37990</name>
    <name type="ORF">F20D10.110</name>
</gene>
<dbReference type="EC" id="1.1.1.195" evidence="2"/>
<dbReference type="EMBL" id="X67815">
    <property type="protein sequence ID" value="CAA48026.1"/>
    <property type="molecule type" value="mRNA"/>
</dbReference>
<dbReference type="EMBL" id="AY302080">
    <property type="protein sequence ID" value="AAP59433.1"/>
    <property type="molecule type" value="mRNA"/>
</dbReference>
<dbReference type="EMBL" id="AL035538">
    <property type="protein sequence ID" value="CAB37539.1"/>
    <property type="molecule type" value="Genomic_DNA"/>
</dbReference>
<dbReference type="EMBL" id="AL161592">
    <property type="protein sequence ID" value="CAB80464.1"/>
    <property type="molecule type" value="Genomic_DNA"/>
</dbReference>
<dbReference type="EMBL" id="CP002687">
    <property type="protein sequence ID" value="AEE86861.1"/>
    <property type="molecule type" value="Genomic_DNA"/>
</dbReference>
<dbReference type="EMBL" id="AF361859">
    <property type="protein sequence ID" value="AAK32871.1"/>
    <property type="molecule type" value="mRNA"/>
</dbReference>
<dbReference type="EMBL" id="AY129478">
    <property type="protein sequence ID" value="AAM91064.1"/>
    <property type="molecule type" value="mRNA"/>
</dbReference>
<dbReference type="PIR" id="S28043">
    <property type="entry name" value="S28043"/>
</dbReference>
<dbReference type="RefSeq" id="NP_195512.1">
    <property type="nucleotide sequence ID" value="NM_119960.3"/>
</dbReference>
<dbReference type="SMR" id="Q02972"/>
<dbReference type="FunCoup" id="Q02972">
    <property type="interactions" value="161"/>
</dbReference>
<dbReference type="STRING" id="3702.Q02972"/>
<dbReference type="iPTMnet" id="Q02972"/>
<dbReference type="PaxDb" id="3702-AT4G37990.1"/>
<dbReference type="ProteomicsDB" id="239147"/>
<dbReference type="EnsemblPlants" id="AT4G37990.1">
    <property type="protein sequence ID" value="AT4G37990.1"/>
    <property type="gene ID" value="AT4G37990"/>
</dbReference>
<dbReference type="GeneID" id="829955"/>
<dbReference type="Gramene" id="AT4G37990.1">
    <property type="protein sequence ID" value="AT4G37990.1"/>
    <property type="gene ID" value="AT4G37990"/>
</dbReference>
<dbReference type="KEGG" id="ath:AT4G37990"/>
<dbReference type="Araport" id="AT4G37990"/>
<dbReference type="TAIR" id="AT4G37990">
    <property type="gene designation" value="ELI3-2"/>
</dbReference>
<dbReference type="eggNOG" id="KOG0023">
    <property type="taxonomic scope" value="Eukaryota"/>
</dbReference>
<dbReference type="HOGENOM" id="CLU_026673_20_2_1"/>
<dbReference type="InParanoid" id="Q02972"/>
<dbReference type="OMA" id="HDDAEYC"/>
<dbReference type="OrthoDB" id="1879366at2759"/>
<dbReference type="PhylomeDB" id="Q02972"/>
<dbReference type="BioCyc" id="ARA:AT4G37990-MONOMER"/>
<dbReference type="SABIO-RK" id="Q02972"/>
<dbReference type="UniPathway" id="UPA00711"/>
<dbReference type="PRO" id="PR:Q02972"/>
<dbReference type="Proteomes" id="UP000006548">
    <property type="component" value="Chromosome 4"/>
</dbReference>
<dbReference type="ExpressionAtlas" id="Q02972">
    <property type="expression patterns" value="baseline and differential"/>
</dbReference>
<dbReference type="GO" id="GO:0005886">
    <property type="term" value="C:plasma membrane"/>
    <property type="evidence" value="ECO:0007005"/>
    <property type="project" value="TAIR"/>
</dbReference>
<dbReference type="GO" id="GO:0047681">
    <property type="term" value="F:aryl-alcohol dehydrogenase (NADP+) activity"/>
    <property type="evidence" value="ECO:0000314"/>
    <property type="project" value="TAIR"/>
</dbReference>
<dbReference type="GO" id="GO:0045551">
    <property type="term" value="F:cinnamyl-alcohol dehydrogenase activity"/>
    <property type="evidence" value="ECO:0000314"/>
    <property type="project" value="UniProtKB"/>
</dbReference>
<dbReference type="GO" id="GO:0008270">
    <property type="term" value="F:zinc ion binding"/>
    <property type="evidence" value="ECO:0007669"/>
    <property type="project" value="InterPro"/>
</dbReference>
<dbReference type="GO" id="GO:0009809">
    <property type="term" value="P:lignin biosynthetic process"/>
    <property type="evidence" value="ECO:0000270"/>
    <property type="project" value="UniProtKB"/>
</dbReference>
<dbReference type="GO" id="GO:0009617">
    <property type="term" value="P:response to bacterium"/>
    <property type="evidence" value="ECO:0000270"/>
    <property type="project" value="TAIR"/>
</dbReference>
<dbReference type="CDD" id="cd05283">
    <property type="entry name" value="CAD1"/>
    <property type="match status" value="1"/>
</dbReference>
<dbReference type="FunFam" id="3.40.50.720:FF:000022">
    <property type="entry name" value="Cinnamyl alcohol dehydrogenase"/>
    <property type="match status" value="1"/>
</dbReference>
<dbReference type="FunFam" id="3.90.180.10:FF:000004">
    <property type="entry name" value="probable cinnamyl alcohol dehydrogenase"/>
    <property type="match status" value="1"/>
</dbReference>
<dbReference type="FunFam" id="3.90.180.10:FF:000100">
    <property type="entry name" value="Putative cinnamyl alcohol dehydrogenase 6"/>
    <property type="match status" value="1"/>
</dbReference>
<dbReference type="Gene3D" id="3.90.180.10">
    <property type="entry name" value="Medium-chain alcohol dehydrogenases, catalytic domain"/>
    <property type="match status" value="1"/>
</dbReference>
<dbReference type="Gene3D" id="3.40.50.720">
    <property type="entry name" value="NAD(P)-binding Rossmann-like Domain"/>
    <property type="match status" value="1"/>
</dbReference>
<dbReference type="InterPro" id="IPR013149">
    <property type="entry name" value="ADH-like_C"/>
</dbReference>
<dbReference type="InterPro" id="IPR013154">
    <property type="entry name" value="ADH-like_N"/>
</dbReference>
<dbReference type="InterPro" id="IPR002328">
    <property type="entry name" value="ADH_Zn_CS"/>
</dbReference>
<dbReference type="InterPro" id="IPR047109">
    <property type="entry name" value="CAD-like"/>
</dbReference>
<dbReference type="InterPro" id="IPR011032">
    <property type="entry name" value="GroES-like_sf"/>
</dbReference>
<dbReference type="InterPro" id="IPR036291">
    <property type="entry name" value="NAD(P)-bd_dom_sf"/>
</dbReference>
<dbReference type="InterPro" id="IPR020843">
    <property type="entry name" value="PKS_ER"/>
</dbReference>
<dbReference type="PANTHER" id="PTHR42683">
    <property type="entry name" value="ALDEHYDE REDUCTASE"/>
    <property type="match status" value="1"/>
</dbReference>
<dbReference type="Pfam" id="PF08240">
    <property type="entry name" value="ADH_N"/>
    <property type="match status" value="1"/>
</dbReference>
<dbReference type="Pfam" id="PF00107">
    <property type="entry name" value="ADH_zinc_N"/>
    <property type="match status" value="1"/>
</dbReference>
<dbReference type="SMART" id="SM00829">
    <property type="entry name" value="PKS_ER"/>
    <property type="match status" value="1"/>
</dbReference>
<dbReference type="SUPFAM" id="SSF50129">
    <property type="entry name" value="GroES-like"/>
    <property type="match status" value="1"/>
</dbReference>
<dbReference type="SUPFAM" id="SSF51735">
    <property type="entry name" value="NAD(P)-binding Rossmann-fold domains"/>
    <property type="match status" value="1"/>
</dbReference>
<dbReference type="PROSITE" id="PS00059">
    <property type="entry name" value="ADH_ZINC"/>
    <property type="match status" value="1"/>
</dbReference>
<name>CADH8_ARATH</name>
<proteinExistence type="evidence at protein level"/>
<keyword id="KW-0438">Lignin biosynthesis</keyword>
<keyword id="KW-0479">Metal-binding</keyword>
<keyword id="KW-0521">NADP</keyword>
<keyword id="KW-0560">Oxidoreductase</keyword>
<keyword id="KW-1185">Reference proteome</keyword>
<keyword id="KW-0862">Zinc</keyword>
<protein>
    <recommendedName>
        <fullName evidence="5">Cinnamyl alcohol dehydrogenase 8</fullName>
        <shortName evidence="5">AtCAD8</shortName>
        <ecNumber evidence="2">1.1.1.195</ecNumber>
    </recommendedName>
    <alternativeName>
        <fullName>NAD-dependent mannitol dehydrogenase 2</fullName>
    </alternativeName>
</protein>